<comment type="function">
    <text evidence="1">Single strand-specific metallo-endoribonuclease involved in late-stage 70S ribosome quality control and in maturation of the 3' terminus of the 16S rRNA.</text>
</comment>
<comment type="cofactor">
    <cofactor evidence="1">
        <name>Zn(2+)</name>
        <dbReference type="ChEBI" id="CHEBI:29105"/>
    </cofactor>
    <text evidence="1">Binds 1 zinc ion.</text>
</comment>
<comment type="subcellular location">
    <subcellularLocation>
        <location evidence="1">Cytoplasm</location>
    </subcellularLocation>
</comment>
<comment type="similarity">
    <text evidence="1">Belongs to the endoribonuclease YbeY family.</text>
</comment>
<name>YBEY_XANCP</name>
<sequence length="161" mass="17609">MTKGPVRLDVGVSYALPRTGLPSSVSFRKWVAAALKGRIREADLAVRVVDEKEGCSLNHHYRGKDYATNVLSFPAEMPQGLPKGVKMPLLGDLVICAPVVAREAAEQGKSLSAHYAHLTVHGTLHLLGWDHEDDKEADAMEQLEREILAELGIDDPYAGER</sequence>
<keyword id="KW-0963">Cytoplasm</keyword>
<keyword id="KW-0255">Endonuclease</keyword>
<keyword id="KW-0378">Hydrolase</keyword>
<keyword id="KW-0479">Metal-binding</keyword>
<keyword id="KW-0540">Nuclease</keyword>
<keyword id="KW-1185">Reference proteome</keyword>
<keyword id="KW-0690">Ribosome biogenesis</keyword>
<keyword id="KW-0698">rRNA processing</keyword>
<keyword id="KW-0862">Zinc</keyword>
<dbReference type="EC" id="3.1.-.-" evidence="1"/>
<dbReference type="EMBL" id="AE008922">
    <property type="protein sequence ID" value="AAM41609.1"/>
    <property type="molecule type" value="Genomic_DNA"/>
</dbReference>
<dbReference type="RefSeq" id="NP_637685.1">
    <property type="nucleotide sequence ID" value="NC_003902.1"/>
</dbReference>
<dbReference type="RefSeq" id="WP_011037474.1">
    <property type="nucleotide sequence ID" value="NC_003902.1"/>
</dbReference>
<dbReference type="SMR" id="Q8P8B2"/>
<dbReference type="STRING" id="190485.XCC2331"/>
<dbReference type="EnsemblBacteria" id="AAM41609">
    <property type="protein sequence ID" value="AAM41609"/>
    <property type="gene ID" value="XCC2331"/>
</dbReference>
<dbReference type="KEGG" id="xcc:XCC2331"/>
<dbReference type="PATRIC" id="fig|190485.4.peg.2482"/>
<dbReference type="eggNOG" id="COG0319">
    <property type="taxonomic scope" value="Bacteria"/>
</dbReference>
<dbReference type="HOGENOM" id="CLU_106710_0_1_6"/>
<dbReference type="OrthoDB" id="9807740at2"/>
<dbReference type="Proteomes" id="UP000001010">
    <property type="component" value="Chromosome"/>
</dbReference>
<dbReference type="GO" id="GO:0005737">
    <property type="term" value="C:cytoplasm"/>
    <property type="evidence" value="ECO:0007669"/>
    <property type="project" value="UniProtKB-SubCell"/>
</dbReference>
<dbReference type="GO" id="GO:0004222">
    <property type="term" value="F:metalloendopeptidase activity"/>
    <property type="evidence" value="ECO:0007669"/>
    <property type="project" value="InterPro"/>
</dbReference>
<dbReference type="GO" id="GO:0004521">
    <property type="term" value="F:RNA endonuclease activity"/>
    <property type="evidence" value="ECO:0007669"/>
    <property type="project" value="UniProtKB-UniRule"/>
</dbReference>
<dbReference type="GO" id="GO:0008270">
    <property type="term" value="F:zinc ion binding"/>
    <property type="evidence" value="ECO:0007669"/>
    <property type="project" value="UniProtKB-UniRule"/>
</dbReference>
<dbReference type="GO" id="GO:0006364">
    <property type="term" value="P:rRNA processing"/>
    <property type="evidence" value="ECO:0007669"/>
    <property type="project" value="UniProtKB-UniRule"/>
</dbReference>
<dbReference type="Gene3D" id="3.40.390.30">
    <property type="entry name" value="Metalloproteases ('zincins'), catalytic domain"/>
    <property type="match status" value="1"/>
</dbReference>
<dbReference type="HAMAP" id="MF_00009">
    <property type="entry name" value="Endoribonucl_YbeY"/>
    <property type="match status" value="1"/>
</dbReference>
<dbReference type="InterPro" id="IPR023091">
    <property type="entry name" value="MetalPrtase_cat_dom_sf_prd"/>
</dbReference>
<dbReference type="InterPro" id="IPR002036">
    <property type="entry name" value="YbeY"/>
</dbReference>
<dbReference type="InterPro" id="IPR020549">
    <property type="entry name" value="YbeY_CS"/>
</dbReference>
<dbReference type="NCBIfam" id="TIGR00043">
    <property type="entry name" value="rRNA maturation RNase YbeY"/>
    <property type="match status" value="1"/>
</dbReference>
<dbReference type="PANTHER" id="PTHR46986">
    <property type="entry name" value="ENDORIBONUCLEASE YBEY, CHLOROPLASTIC"/>
    <property type="match status" value="1"/>
</dbReference>
<dbReference type="PANTHER" id="PTHR46986:SF1">
    <property type="entry name" value="ENDORIBONUCLEASE YBEY, CHLOROPLASTIC"/>
    <property type="match status" value="1"/>
</dbReference>
<dbReference type="Pfam" id="PF02130">
    <property type="entry name" value="YbeY"/>
    <property type="match status" value="1"/>
</dbReference>
<dbReference type="SUPFAM" id="SSF55486">
    <property type="entry name" value="Metalloproteases ('zincins'), catalytic domain"/>
    <property type="match status" value="1"/>
</dbReference>
<dbReference type="PROSITE" id="PS01306">
    <property type="entry name" value="UPF0054"/>
    <property type="match status" value="1"/>
</dbReference>
<evidence type="ECO:0000255" key="1">
    <source>
        <dbReference type="HAMAP-Rule" id="MF_00009"/>
    </source>
</evidence>
<reference key="1">
    <citation type="journal article" date="2002" name="Nature">
        <title>Comparison of the genomes of two Xanthomonas pathogens with differing host specificities.</title>
        <authorList>
            <person name="da Silva A.C.R."/>
            <person name="Ferro J.A."/>
            <person name="Reinach F.C."/>
            <person name="Farah C.S."/>
            <person name="Furlan L.R."/>
            <person name="Quaggio R.B."/>
            <person name="Monteiro-Vitorello C.B."/>
            <person name="Van Sluys M.A."/>
            <person name="Almeida N.F. Jr."/>
            <person name="Alves L.M.C."/>
            <person name="do Amaral A.M."/>
            <person name="Bertolini M.C."/>
            <person name="Camargo L.E.A."/>
            <person name="Camarotte G."/>
            <person name="Cannavan F."/>
            <person name="Cardozo J."/>
            <person name="Chambergo F."/>
            <person name="Ciapina L.P."/>
            <person name="Cicarelli R.M.B."/>
            <person name="Coutinho L.L."/>
            <person name="Cursino-Santos J.R."/>
            <person name="El-Dorry H."/>
            <person name="Faria J.B."/>
            <person name="Ferreira A.J.S."/>
            <person name="Ferreira R.C.C."/>
            <person name="Ferro M.I.T."/>
            <person name="Formighieri E.F."/>
            <person name="Franco M.C."/>
            <person name="Greggio C.C."/>
            <person name="Gruber A."/>
            <person name="Katsuyama A.M."/>
            <person name="Kishi L.T."/>
            <person name="Leite R.P."/>
            <person name="Lemos E.G.M."/>
            <person name="Lemos M.V.F."/>
            <person name="Locali E.C."/>
            <person name="Machado M.A."/>
            <person name="Madeira A.M.B.N."/>
            <person name="Martinez-Rossi N.M."/>
            <person name="Martins E.C."/>
            <person name="Meidanis J."/>
            <person name="Menck C.F.M."/>
            <person name="Miyaki C.Y."/>
            <person name="Moon D.H."/>
            <person name="Moreira L.M."/>
            <person name="Novo M.T.M."/>
            <person name="Okura V.K."/>
            <person name="Oliveira M.C."/>
            <person name="Oliveira V.R."/>
            <person name="Pereira H.A."/>
            <person name="Rossi A."/>
            <person name="Sena J.A.D."/>
            <person name="Silva C."/>
            <person name="de Souza R.F."/>
            <person name="Spinola L.A.F."/>
            <person name="Takita M.A."/>
            <person name="Tamura R.E."/>
            <person name="Teixeira E.C."/>
            <person name="Tezza R.I.D."/>
            <person name="Trindade dos Santos M."/>
            <person name="Truffi D."/>
            <person name="Tsai S.M."/>
            <person name="White F.F."/>
            <person name="Setubal J.C."/>
            <person name="Kitajima J.P."/>
        </authorList>
    </citation>
    <scope>NUCLEOTIDE SEQUENCE [LARGE SCALE GENOMIC DNA]</scope>
    <source>
        <strain>ATCC 33913 / DSM 3586 / NCPPB 528 / LMG 568 / P 25</strain>
    </source>
</reference>
<protein>
    <recommendedName>
        <fullName evidence="1">Endoribonuclease YbeY</fullName>
        <ecNumber evidence="1">3.1.-.-</ecNumber>
    </recommendedName>
</protein>
<gene>
    <name evidence="1" type="primary">ybeY</name>
    <name type="ordered locus">XCC2331</name>
</gene>
<accession>Q8P8B2</accession>
<feature type="chain" id="PRO_0000102571" description="Endoribonuclease YbeY">
    <location>
        <begin position="1"/>
        <end position="161"/>
    </location>
</feature>
<feature type="binding site" evidence="1">
    <location>
        <position position="121"/>
    </location>
    <ligand>
        <name>Zn(2+)</name>
        <dbReference type="ChEBI" id="CHEBI:29105"/>
        <note>catalytic</note>
    </ligand>
</feature>
<feature type="binding site" evidence="1">
    <location>
        <position position="125"/>
    </location>
    <ligand>
        <name>Zn(2+)</name>
        <dbReference type="ChEBI" id="CHEBI:29105"/>
        <note>catalytic</note>
    </ligand>
</feature>
<feature type="binding site" evidence="1">
    <location>
        <position position="131"/>
    </location>
    <ligand>
        <name>Zn(2+)</name>
        <dbReference type="ChEBI" id="CHEBI:29105"/>
        <note>catalytic</note>
    </ligand>
</feature>
<organism>
    <name type="scientific">Xanthomonas campestris pv. campestris (strain ATCC 33913 / DSM 3586 / NCPPB 528 / LMG 568 / P 25)</name>
    <dbReference type="NCBI Taxonomy" id="190485"/>
    <lineage>
        <taxon>Bacteria</taxon>
        <taxon>Pseudomonadati</taxon>
        <taxon>Pseudomonadota</taxon>
        <taxon>Gammaproteobacteria</taxon>
        <taxon>Lysobacterales</taxon>
        <taxon>Lysobacteraceae</taxon>
        <taxon>Xanthomonas</taxon>
    </lineage>
</organism>
<proteinExistence type="inferred from homology"/>